<proteinExistence type="inferred from homology"/>
<reference key="1">
    <citation type="journal article" date="2005" name="BMC Biol.">
        <title>The sequence of rice chromosomes 11 and 12, rich in disease resistance genes and recent gene duplications.</title>
        <authorList>
            <consortium name="The rice chromosomes 11 and 12 sequencing consortia"/>
        </authorList>
    </citation>
    <scope>NUCLEOTIDE SEQUENCE [LARGE SCALE GENOMIC DNA]</scope>
    <source>
        <strain>cv. Nipponbare</strain>
    </source>
</reference>
<reference key="2">
    <citation type="journal article" date="2005" name="Nature">
        <title>The map-based sequence of the rice genome.</title>
        <authorList>
            <consortium name="International rice genome sequencing project (IRGSP)"/>
        </authorList>
    </citation>
    <scope>NUCLEOTIDE SEQUENCE [LARGE SCALE GENOMIC DNA]</scope>
    <source>
        <strain>cv. Nipponbare</strain>
    </source>
</reference>
<reference key="3">
    <citation type="journal article" date="2008" name="Nucleic Acids Res.">
        <title>The rice annotation project database (RAP-DB): 2008 update.</title>
        <authorList>
            <consortium name="The rice annotation project (RAP)"/>
        </authorList>
    </citation>
    <scope>GENOME REANNOTATION</scope>
    <source>
        <strain>cv. Nipponbare</strain>
    </source>
</reference>
<reference key="4">
    <citation type="journal article" date="2013" name="Rice">
        <title>Improvement of the Oryza sativa Nipponbare reference genome using next generation sequence and optical map data.</title>
        <authorList>
            <person name="Kawahara Y."/>
            <person name="de la Bastide M."/>
            <person name="Hamilton J.P."/>
            <person name="Kanamori H."/>
            <person name="McCombie W.R."/>
            <person name="Ouyang S."/>
            <person name="Schwartz D.C."/>
            <person name="Tanaka T."/>
            <person name="Wu J."/>
            <person name="Zhou S."/>
            <person name="Childs K.L."/>
            <person name="Davidson R.M."/>
            <person name="Lin H."/>
            <person name="Quesada-Ocampo L."/>
            <person name="Vaillancourt B."/>
            <person name="Sakai H."/>
            <person name="Lee S.S."/>
            <person name="Kim J."/>
            <person name="Numa H."/>
            <person name="Itoh T."/>
            <person name="Buell C.R."/>
            <person name="Matsumoto T."/>
        </authorList>
    </citation>
    <scope>GENOME REANNOTATION</scope>
    <source>
        <strain>cv. Nipponbare</strain>
    </source>
</reference>
<reference key="5">
    <citation type="journal article" date="2005" name="PLoS Biol.">
        <title>The genomes of Oryza sativa: a history of duplications.</title>
        <authorList>
            <person name="Yu J."/>
            <person name="Wang J."/>
            <person name="Lin W."/>
            <person name="Li S."/>
            <person name="Li H."/>
            <person name="Zhou J."/>
            <person name="Ni P."/>
            <person name="Dong W."/>
            <person name="Hu S."/>
            <person name="Zeng C."/>
            <person name="Zhang J."/>
            <person name="Zhang Y."/>
            <person name="Li R."/>
            <person name="Xu Z."/>
            <person name="Li S."/>
            <person name="Li X."/>
            <person name="Zheng H."/>
            <person name="Cong L."/>
            <person name="Lin L."/>
            <person name="Yin J."/>
            <person name="Geng J."/>
            <person name="Li G."/>
            <person name="Shi J."/>
            <person name="Liu J."/>
            <person name="Lv H."/>
            <person name="Li J."/>
            <person name="Wang J."/>
            <person name="Deng Y."/>
            <person name="Ran L."/>
            <person name="Shi X."/>
            <person name="Wang X."/>
            <person name="Wu Q."/>
            <person name="Li C."/>
            <person name="Ren X."/>
            <person name="Wang J."/>
            <person name="Wang X."/>
            <person name="Li D."/>
            <person name="Liu D."/>
            <person name="Zhang X."/>
            <person name="Ji Z."/>
            <person name="Zhao W."/>
            <person name="Sun Y."/>
            <person name="Zhang Z."/>
            <person name="Bao J."/>
            <person name="Han Y."/>
            <person name="Dong L."/>
            <person name="Ji J."/>
            <person name="Chen P."/>
            <person name="Wu S."/>
            <person name="Liu J."/>
            <person name="Xiao Y."/>
            <person name="Bu D."/>
            <person name="Tan J."/>
            <person name="Yang L."/>
            <person name="Ye C."/>
            <person name="Zhang J."/>
            <person name="Xu J."/>
            <person name="Zhou Y."/>
            <person name="Yu Y."/>
            <person name="Zhang B."/>
            <person name="Zhuang S."/>
            <person name="Wei H."/>
            <person name="Liu B."/>
            <person name="Lei M."/>
            <person name="Yu H."/>
            <person name="Li Y."/>
            <person name="Xu H."/>
            <person name="Wei S."/>
            <person name="He X."/>
            <person name="Fang L."/>
            <person name="Zhang Z."/>
            <person name="Zhang Y."/>
            <person name="Huang X."/>
            <person name="Su Z."/>
            <person name="Tong W."/>
            <person name="Li J."/>
            <person name="Tong Z."/>
            <person name="Li S."/>
            <person name="Ye J."/>
            <person name="Wang L."/>
            <person name="Fang L."/>
            <person name="Lei T."/>
            <person name="Chen C.-S."/>
            <person name="Chen H.-C."/>
            <person name="Xu Z."/>
            <person name="Li H."/>
            <person name="Huang H."/>
            <person name="Zhang F."/>
            <person name="Xu H."/>
            <person name="Li N."/>
            <person name="Zhao C."/>
            <person name="Li S."/>
            <person name="Dong L."/>
            <person name="Huang Y."/>
            <person name="Li L."/>
            <person name="Xi Y."/>
            <person name="Qi Q."/>
            <person name="Li W."/>
            <person name="Zhang B."/>
            <person name="Hu W."/>
            <person name="Zhang Y."/>
            <person name="Tian X."/>
            <person name="Jiao Y."/>
            <person name="Liang X."/>
            <person name="Jin J."/>
            <person name="Gao L."/>
            <person name="Zheng W."/>
            <person name="Hao B."/>
            <person name="Liu S.-M."/>
            <person name="Wang W."/>
            <person name="Yuan L."/>
            <person name="Cao M."/>
            <person name="McDermott J."/>
            <person name="Samudrala R."/>
            <person name="Wang J."/>
            <person name="Wong G.K.-S."/>
            <person name="Yang H."/>
        </authorList>
    </citation>
    <scope>NUCLEOTIDE SEQUENCE [LARGE SCALE GENOMIC DNA]</scope>
    <source>
        <strain>cv. Nipponbare</strain>
    </source>
</reference>
<reference key="6">
    <citation type="journal article" date="2003" name="Science">
        <title>Collection, mapping, and annotation of over 28,000 cDNA clones from japonica rice.</title>
        <authorList>
            <consortium name="The rice full-length cDNA consortium"/>
        </authorList>
    </citation>
    <scope>NUCLEOTIDE SEQUENCE [LARGE SCALE MRNA]</scope>
    <source>
        <strain>cv. Nipponbare</strain>
    </source>
</reference>
<reference key="7">
    <citation type="journal article" date="2006" name="J. Exp. Bot.">
        <title>Genome-wide analysis of plant glutaredoxin systems.</title>
        <authorList>
            <person name="Rouhier N."/>
            <person name="Couturier J."/>
            <person name="Jacquot J.-P."/>
        </authorList>
    </citation>
    <scope>GENE FAMILY</scope>
</reference>
<evidence type="ECO:0000250" key="1"/>
<evidence type="ECO:0000255" key="2">
    <source>
        <dbReference type="PROSITE-ProRule" id="PRU00686"/>
    </source>
</evidence>
<evidence type="ECO:0000305" key="3"/>
<evidence type="ECO:0000312" key="4">
    <source>
        <dbReference type="EMBL" id="EAZ19160.1"/>
    </source>
</evidence>
<comment type="function">
    <text evidence="1">Has a glutathione-disulfide oxidoreductase activity in the presence of NADPH and glutathione reductase. Reduces low molecular weight disulfides and proteins (By similarity).</text>
</comment>
<comment type="subcellular location">
    <subcellularLocation>
        <location evidence="1">Cytoplasm</location>
    </subcellularLocation>
    <subcellularLocation>
        <location evidence="1">Nucleus</location>
    </subcellularLocation>
</comment>
<comment type="similarity">
    <text evidence="3">Belongs to the glutaredoxin family. CC-type subfamily.</text>
</comment>
<name>GRC10_ORYSJ</name>
<sequence>MERVAKLASERAVVVFTASNCGMCHAVTSLLVGELGVNAAVHELDKDPRGRDMERELARRLNGGGGGGRALPAVFVGGNLVGGANRVMSLHLAGELVPMLKNAGALWL</sequence>
<feature type="chain" id="PRO_0000269671" description="Glutaredoxin-C10">
    <location>
        <begin position="1"/>
        <end position="108"/>
    </location>
</feature>
<feature type="domain" description="Glutaredoxin" evidence="2">
    <location>
        <begin position="1"/>
        <end position="107"/>
    </location>
</feature>
<feature type="short sequence motif" description="Responsive for interaction with TGA factors" evidence="1">
    <location>
        <begin position="105"/>
        <end position="108"/>
    </location>
</feature>
<feature type="disulfide bond" description="Redox-active" evidence="1">
    <location>
        <begin position="21"/>
        <end position="24"/>
    </location>
</feature>
<protein>
    <recommendedName>
        <fullName>Glutaredoxin-C10</fullName>
    </recommendedName>
</protein>
<dbReference type="EMBL" id="DP000010">
    <property type="protein sequence ID" value="ABA95122.1"/>
    <property type="molecule type" value="Genomic_DNA"/>
</dbReference>
<dbReference type="EMBL" id="AP008217">
    <property type="protein sequence ID" value="BAF28753.1"/>
    <property type="molecule type" value="Genomic_DNA"/>
</dbReference>
<dbReference type="EMBL" id="AP014967">
    <property type="protein sequence ID" value="BAT15102.1"/>
    <property type="molecule type" value="Genomic_DNA"/>
</dbReference>
<dbReference type="EMBL" id="CM000148">
    <property type="protein sequence ID" value="EAZ19160.1"/>
    <property type="molecule type" value="Genomic_DNA"/>
</dbReference>
<dbReference type="EMBL" id="AK108017">
    <property type="protein sequence ID" value="BAG98251.1"/>
    <property type="molecule type" value="mRNA"/>
</dbReference>
<dbReference type="RefSeq" id="XP_015616678.1">
    <property type="nucleotide sequence ID" value="XM_015761192.1"/>
</dbReference>
<dbReference type="SMR" id="Q2R076"/>
<dbReference type="FunCoup" id="Q2R076">
    <property type="interactions" value="17"/>
</dbReference>
<dbReference type="STRING" id="39947.Q2R076"/>
<dbReference type="PaxDb" id="39947-Q2R076"/>
<dbReference type="EnsemblPlants" id="Os11t0655900-01">
    <property type="protein sequence ID" value="Os11t0655900-01"/>
    <property type="gene ID" value="Os11g0655900"/>
</dbReference>
<dbReference type="Gramene" id="Os11t0655900-01">
    <property type="protein sequence ID" value="Os11t0655900-01"/>
    <property type="gene ID" value="Os11g0655900"/>
</dbReference>
<dbReference type="KEGG" id="dosa:Os11g0655900"/>
<dbReference type="eggNOG" id="KOG1752">
    <property type="taxonomic scope" value="Eukaryota"/>
</dbReference>
<dbReference type="HOGENOM" id="CLU_026126_6_0_1"/>
<dbReference type="InParanoid" id="Q2R076"/>
<dbReference type="OMA" id="MAMEHVA"/>
<dbReference type="OrthoDB" id="620792at2759"/>
<dbReference type="Proteomes" id="UP000000763">
    <property type="component" value="Chromosome 11"/>
</dbReference>
<dbReference type="Proteomes" id="UP000007752">
    <property type="component" value="Chromosome 11"/>
</dbReference>
<dbReference type="Proteomes" id="UP000059680">
    <property type="component" value="Chromosome 11"/>
</dbReference>
<dbReference type="GO" id="GO:0005737">
    <property type="term" value="C:cytoplasm"/>
    <property type="evidence" value="ECO:0007669"/>
    <property type="project" value="UniProtKB-SubCell"/>
</dbReference>
<dbReference type="GO" id="GO:0005634">
    <property type="term" value="C:nucleus"/>
    <property type="evidence" value="ECO:0007669"/>
    <property type="project" value="UniProtKB-SubCell"/>
</dbReference>
<dbReference type="CDD" id="cd03419">
    <property type="entry name" value="GRX_GRXh_1_2_like"/>
    <property type="match status" value="1"/>
</dbReference>
<dbReference type="Gene3D" id="3.40.30.10">
    <property type="entry name" value="Glutaredoxin"/>
    <property type="match status" value="1"/>
</dbReference>
<dbReference type="InterPro" id="IPR011905">
    <property type="entry name" value="GlrX-like_pln_2"/>
</dbReference>
<dbReference type="InterPro" id="IPR002109">
    <property type="entry name" value="Glutaredoxin"/>
</dbReference>
<dbReference type="InterPro" id="IPR014025">
    <property type="entry name" value="Glutaredoxin_subgr"/>
</dbReference>
<dbReference type="InterPro" id="IPR036249">
    <property type="entry name" value="Thioredoxin-like_sf"/>
</dbReference>
<dbReference type="NCBIfam" id="TIGR02189">
    <property type="entry name" value="GlrX-like_plant"/>
    <property type="match status" value="1"/>
</dbReference>
<dbReference type="PANTHER" id="PTHR10168">
    <property type="entry name" value="GLUTAREDOXIN"/>
    <property type="match status" value="1"/>
</dbReference>
<dbReference type="Pfam" id="PF00462">
    <property type="entry name" value="Glutaredoxin"/>
    <property type="match status" value="1"/>
</dbReference>
<dbReference type="PRINTS" id="PR00160">
    <property type="entry name" value="GLUTAREDOXIN"/>
</dbReference>
<dbReference type="SUPFAM" id="SSF52833">
    <property type="entry name" value="Thioredoxin-like"/>
    <property type="match status" value="1"/>
</dbReference>
<dbReference type="PROSITE" id="PS51354">
    <property type="entry name" value="GLUTAREDOXIN_2"/>
    <property type="match status" value="1"/>
</dbReference>
<organism>
    <name type="scientific">Oryza sativa subsp. japonica</name>
    <name type="common">Rice</name>
    <dbReference type="NCBI Taxonomy" id="39947"/>
    <lineage>
        <taxon>Eukaryota</taxon>
        <taxon>Viridiplantae</taxon>
        <taxon>Streptophyta</taxon>
        <taxon>Embryophyta</taxon>
        <taxon>Tracheophyta</taxon>
        <taxon>Spermatophyta</taxon>
        <taxon>Magnoliopsida</taxon>
        <taxon>Liliopsida</taxon>
        <taxon>Poales</taxon>
        <taxon>Poaceae</taxon>
        <taxon>BOP clade</taxon>
        <taxon>Oryzoideae</taxon>
        <taxon>Oryzeae</taxon>
        <taxon>Oryzinae</taxon>
        <taxon>Oryza</taxon>
        <taxon>Oryza sativa</taxon>
    </lineage>
</organism>
<gene>
    <name type="primary">GRXC10</name>
    <name type="ordered locus">Os11g0655900</name>
    <name type="ordered locus">LOC_Os11g43520</name>
    <name evidence="4" type="ORF">OsJ_34697</name>
</gene>
<accession>Q2R076</accession>
<accession>A3CDJ7</accession>
<keyword id="KW-0963">Cytoplasm</keyword>
<keyword id="KW-1015">Disulfide bond</keyword>
<keyword id="KW-0249">Electron transport</keyword>
<keyword id="KW-0539">Nucleus</keyword>
<keyword id="KW-0676">Redox-active center</keyword>
<keyword id="KW-1185">Reference proteome</keyword>
<keyword id="KW-0813">Transport</keyword>